<organism>
    <name type="scientific">Halobacterium salinarum (strain ATCC 700922 / JCM 11081 / NRC-1)</name>
    <name type="common">Halobacterium halobium</name>
    <dbReference type="NCBI Taxonomy" id="64091"/>
    <lineage>
        <taxon>Archaea</taxon>
        <taxon>Methanobacteriati</taxon>
        <taxon>Methanobacteriota</taxon>
        <taxon>Stenosarchaea group</taxon>
        <taxon>Halobacteria</taxon>
        <taxon>Halobacteriales</taxon>
        <taxon>Halobacteriaceae</taxon>
        <taxon>Halobacterium</taxon>
        <taxon>Halobacterium salinarum NRC-34001</taxon>
    </lineage>
</organism>
<gene>
    <name evidence="1" type="primary">thrB</name>
    <name type="ordered locus">VNG_1797G</name>
</gene>
<keyword id="KW-0028">Amino-acid biosynthesis</keyword>
<keyword id="KW-0067">ATP-binding</keyword>
<keyword id="KW-0963">Cytoplasm</keyword>
<keyword id="KW-0418">Kinase</keyword>
<keyword id="KW-0547">Nucleotide-binding</keyword>
<keyword id="KW-1185">Reference proteome</keyword>
<keyword id="KW-0791">Threonine biosynthesis</keyword>
<keyword id="KW-0808">Transferase</keyword>
<reference key="1">
    <citation type="journal article" date="2000" name="Proc. Natl. Acad. Sci. U.S.A.">
        <title>Genome sequence of Halobacterium species NRC-1.</title>
        <authorList>
            <person name="Ng W.V."/>
            <person name="Kennedy S.P."/>
            <person name="Mahairas G.G."/>
            <person name="Berquist B."/>
            <person name="Pan M."/>
            <person name="Shukla H.D."/>
            <person name="Lasky S.R."/>
            <person name="Baliga N.S."/>
            <person name="Thorsson V."/>
            <person name="Sbrogna J."/>
            <person name="Swartzell S."/>
            <person name="Weir D."/>
            <person name="Hall J."/>
            <person name="Dahl T.A."/>
            <person name="Welti R."/>
            <person name="Goo Y.A."/>
            <person name="Leithauser B."/>
            <person name="Keller K."/>
            <person name="Cruz R."/>
            <person name="Danson M.J."/>
            <person name="Hough D.W."/>
            <person name="Maddocks D.G."/>
            <person name="Jablonski P.E."/>
            <person name="Krebs M.P."/>
            <person name="Angevine C.M."/>
            <person name="Dale H."/>
            <person name="Isenbarger T.A."/>
            <person name="Peck R.F."/>
            <person name="Pohlschroder M."/>
            <person name="Spudich J.L."/>
            <person name="Jung K.-H."/>
            <person name="Alam M."/>
            <person name="Freitas T."/>
            <person name="Hou S."/>
            <person name="Daniels C.J."/>
            <person name="Dennis P.P."/>
            <person name="Omer A.D."/>
            <person name="Ebhardt H."/>
            <person name="Lowe T.M."/>
            <person name="Liang P."/>
            <person name="Riley M."/>
            <person name="Hood L."/>
            <person name="DasSarma S."/>
        </authorList>
    </citation>
    <scope>NUCLEOTIDE SEQUENCE [LARGE SCALE GENOMIC DNA]</scope>
    <source>
        <strain>ATCC 700922 / JCM 11081 / NRC-1</strain>
    </source>
</reference>
<sequence>MVVTVRAPATSANLGSGFDVFGVALSKPADVVRVERADTTTITVTGAGAQYVPTDPQENTAGVVAAALDAPATIHINKGVRPSSGLGSSAASAAAATVALAELYDRPLDDDALVRAAAQGEAAASGVAHADNVAPAILGGFTIVREDGIEHVDASLALAVCLPETTVSTRDARGVVPESAAMEAVVSTVESAATLTLGMCENDPQRVGRGVEDALVTPARARLMDGYEAASAAARDAGATGVTISGSGPGVVAVCRRRDRKRVAAALVDGFDSAGVAASAYQTRIGDGATRLAADGDDRAP</sequence>
<accession>Q9HP55</accession>
<protein>
    <recommendedName>
        <fullName evidence="1">Homoserine kinase</fullName>
        <shortName evidence="1">HK</shortName>
        <shortName evidence="1">HSK</shortName>
        <ecNumber evidence="1">2.7.1.39</ecNumber>
    </recommendedName>
</protein>
<proteinExistence type="inferred from homology"/>
<comment type="function">
    <text evidence="1">Catalyzes the ATP-dependent phosphorylation of L-homoserine to L-homoserine phosphate.</text>
</comment>
<comment type="catalytic activity">
    <reaction evidence="1">
        <text>L-homoserine + ATP = O-phospho-L-homoserine + ADP + H(+)</text>
        <dbReference type="Rhea" id="RHEA:13985"/>
        <dbReference type="ChEBI" id="CHEBI:15378"/>
        <dbReference type="ChEBI" id="CHEBI:30616"/>
        <dbReference type="ChEBI" id="CHEBI:57476"/>
        <dbReference type="ChEBI" id="CHEBI:57590"/>
        <dbReference type="ChEBI" id="CHEBI:456216"/>
        <dbReference type="EC" id="2.7.1.39"/>
    </reaction>
</comment>
<comment type="pathway">
    <text evidence="1">Amino-acid biosynthesis; L-threonine biosynthesis; L-threonine from L-aspartate: step 4/5.</text>
</comment>
<comment type="subcellular location">
    <subcellularLocation>
        <location evidence="1">Cytoplasm</location>
    </subcellularLocation>
</comment>
<comment type="similarity">
    <text evidence="1">Belongs to the GHMP kinase family. Homoserine kinase subfamily.</text>
</comment>
<name>KHSE_HALSA</name>
<evidence type="ECO:0000255" key="1">
    <source>
        <dbReference type="HAMAP-Rule" id="MF_00384"/>
    </source>
</evidence>
<feature type="chain" id="PRO_0000156640" description="Homoserine kinase">
    <location>
        <begin position="1"/>
        <end position="301"/>
    </location>
</feature>
<feature type="binding site" evidence="1">
    <location>
        <begin position="81"/>
        <end position="91"/>
    </location>
    <ligand>
        <name>ATP</name>
        <dbReference type="ChEBI" id="CHEBI:30616"/>
    </ligand>
</feature>
<dbReference type="EC" id="2.7.1.39" evidence="1"/>
<dbReference type="EMBL" id="AE004437">
    <property type="protein sequence ID" value="AAG20015.1"/>
    <property type="molecule type" value="Genomic_DNA"/>
</dbReference>
<dbReference type="PIR" id="C84331">
    <property type="entry name" value="C84331"/>
</dbReference>
<dbReference type="RefSeq" id="WP_010903313.1">
    <property type="nucleotide sequence ID" value="NC_002607.1"/>
</dbReference>
<dbReference type="SMR" id="Q9HP55"/>
<dbReference type="FunCoup" id="Q9HP55">
    <property type="interactions" value="100"/>
</dbReference>
<dbReference type="STRING" id="64091.VNG_1797G"/>
<dbReference type="PaxDb" id="64091-VNG_1797G"/>
<dbReference type="KEGG" id="hal:VNG_1797G"/>
<dbReference type="PATRIC" id="fig|64091.14.peg.1370"/>
<dbReference type="HOGENOM" id="CLU_041243_1_1_2"/>
<dbReference type="InParanoid" id="Q9HP55"/>
<dbReference type="OrthoDB" id="28273at2157"/>
<dbReference type="PhylomeDB" id="Q9HP55"/>
<dbReference type="UniPathway" id="UPA00050">
    <property type="reaction ID" value="UER00064"/>
</dbReference>
<dbReference type="Proteomes" id="UP000000554">
    <property type="component" value="Chromosome"/>
</dbReference>
<dbReference type="GO" id="GO:0005737">
    <property type="term" value="C:cytoplasm"/>
    <property type="evidence" value="ECO:0007669"/>
    <property type="project" value="UniProtKB-SubCell"/>
</dbReference>
<dbReference type="GO" id="GO:0005524">
    <property type="term" value="F:ATP binding"/>
    <property type="evidence" value="ECO:0007669"/>
    <property type="project" value="UniProtKB-UniRule"/>
</dbReference>
<dbReference type="GO" id="GO:0004413">
    <property type="term" value="F:homoserine kinase activity"/>
    <property type="evidence" value="ECO:0007669"/>
    <property type="project" value="UniProtKB-UniRule"/>
</dbReference>
<dbReference type="GO" id="GO:0009088">
    <property type="term" value="P:threonine biosynthetic process"/>
    <property type="evidence" value="ECO:0007669"/>
    <property type="project" value="UniProtKB-UniRule"/>
</dbReference>
<dbReference type="Gene3D" id="3.30.230.10">
    <property type="match status" value="1"/>
</dbReference>
<dbReference type="Gene3D" id="3.30.70.890">
    <property type="entry name" value="GHMP kinase, C-terminal domain"/>
    <property type="match status" value="1"/>
</dbReference>
<dbReference type="HAMAP" id="MF_00384">
    <property type="entry name" value="Homoser_kinase"/>
    <property type="match status" value="1"/>
</dbReference>
<dbReference type="InterPro" id="IPR013750">
    <property type="entry name" value="GHMP_kinase_C_dom"/>
</dbReference>
<dbReference type="InterPro" id="IPR036554">
    <property type="entry name" value="GHMP_kinase_C_sf"/>
</dbReference>
<dbReference type="InterPro" id="IPR006204">
    <property type="entry name" value="GHMP_kinase_N_dom"/>
</dbReference>
<dbReference type="InterPro" id="IPR000870">
    <property type="entry name" value="Homoserine_kinase"/>
</dbReference>
<dbReference type="InterPro" id="IPR020568">
    <property type="entry name" value="Ribosomal_Su5_D2-typ_SF"/>
</dbReference>
<dbReference type="InterPro" id="IPR014721">
    <property type="entry name" value="Ribsml_uS5_D2-typ_fold_subgr"/>
</dbReference>
<dbReference type="NCBIfam" id="NF002288">
    <property type="entry name" value="PRK01212.1-4"/>
    <property type="match status" value="1"/>
</dbReference>
<dbReference type="NCBIfam" id="TIGR00191">
    <property type="entry name" value="thrB"/>
    <property type="match status" value="1"/>
</dbReference>
<dbReference type="PANTHER" id="PTHR20861:SF1">
    <property type="entry name" value="HOMOSERINE KINASE"/>
    <property type="match status" value="1"/>
</dbReference>
<dbReference type="PANTHER" id="PTHR20861">
    <property type="entry name" value="HOMOSERINE/4-DIPHOSPHOCYTIDYL-2-C-METHYL-D-ERYTHRITOL KINASE"/>
    <property type="match status" value="1"/>
</dbReference>
<dbReference type="Pfam" id="PF08544">
    <property type="entry name" value="GHMP_kinases_C"/>
    <property type="match status" value="1"/>
</dbReference>
<dbReference type="Pfam" id="PF00288">
    <property type="entry name" value="GHMP_kinases_N"/>
    <property type="match status" value="1"/>
</dbReference>
<dbReference type="PIRSF" id="PIRSF000676">
    <property type="entry name" value="Homoser_kin"/>
    <property type="match status" value="1"/>
</dbReference>
<dbReference type="PRINTS" id="PR00958">
    <property type="entry name" value="HOMSERKINASE"/>
</dbReference>
<dbReference type="SUPFAM" id="SSF55060">
    <property type="entry name" value="GHMP Kinase, C-terminal domain"/>
    <property type="match status" value="1"/>
</dbReference>
<dbReference type="SUPFAM" id="SSF54211">
    <property type="entry name" value="Ribosomal protein S5 domain 2-like"/>
    <property type="match status" value="1"/>
</dbReference>